<accession>Q4USQ0</accession>
<feature type="chain" id="PRO_0000264457" description="UDP-3-O-acylglucosamine N-acyltransferase">
    <location>
        <begin position="1"/>
        <end position="337"/>
    </location>
</feature>
<feature type="active site" description="Proton acceptor" evidence="1">
    <location>
        <position position="238"/>
    </location>
</feature>
<organism>
    <name type="scientific">Xanthomonas campestris pv. campestris (strain 8004)</name>
    <dbReference type="NCBI Taxonomy" id="314565"/>
    <lineage>
        <taxon>Bacteria</taxon>
        <taxon>Pseudomonadati</taxon>
        <taxon>Pseudomonadota</taxon>
        <taxon>Gammaproteobacteria</taxon>
        <taxon>Lysobacterales</taxon>
        <taxon>Lysobacteraceae</taxon>
        <taxon>Xanthomonas</taxon>
    </lineage>
</organism>
<name>LPXD_XANC8</name>
<proteinExistence type="inferred from homology"/>
<evidence type="ECO:0000255" key="1">
    <source>
        <dbReference type="HAMAP-Rule" id="MF_00523"/>
    </source>
</evidence>
<dbReference type="EC" id="2.3.1.191" evidence="1"/>
<dbReference type="EMBL" id="CP000050">
    <property type="protein sequence ID" value="AAY49923.1"/>
    <property type="molecule type" value="Genomic_DNA"/>
</dbReference>
<dbReference type="RefSeq" id="WP_011036555.1">
    <property type="nucleotide sequence ID" value="NZ_CP155948.1"/>
</dbReference>
<dbReference type="SMR" id="Q4USQ0"/>
<dbReference type="GeneID" id="58014039"/>
<dbReference type="KEGG" id="xcb:XC_2875"/>
<dbReference type="HOGENOM" id="CLU_049865_0_1_6"/>
<dbReference type="UniPathway" id="UPA00973"/>
<dbReference type="Proteomes" id="UP000000420">
    <property type="component" value="Chromosome"/>
</dbReference>
<dbReference type="GO" id="GO:0016020">
    <property type="term" value="C:membrane"/>
    <property type="evidence" value="ECO:0007669"/>
    <property type="project" value="GOC"/>
</dbReference>
<dbReference type="GO" id="GO:0016410">
    <property type="term" value="F:N-acyltransferase activity"/>
    <property type="evidence" value="ECO:0007669"/>
    <property type="project" value="InterPro"/>
</dbReference>
<dbReference type="GO" id="GO:0009245">
    <property type="term" value="P:lipid A biosynthetic process"/>
    <property type="evidence" value="ECO:0007669"/>
    <property type="project" value="UniProtKB-UniRule"/>
</dbReference>
<dbReference type="CDD" id="cd03352">
    <property type="entry name" value="LbH_LpxD"/>
    <property type="match status" value="1"/>
</dbReference>
<dbReference type="Gene3D" id="1.20.5.170">
    <property type="match status" value="1"/>
</dbReference>
<dbReference type="Gene3D" id="2.160.10.10">
    <property type="entry name" value="Hexapeptide repeat proteins"/>
    <property type="match status" value="1"/>
</dbReference>
<dbReference type="Gene3D" id="3.40.1390.10">
    <property type="entry name" value="MurE/MurF, N-terminal domain"/>
    <property type="match status" value="1"/>
</dbReference>
<dbReference type="HAMAP" id="MF_00523">
    <property type="entry name" value="LpxD"/>
    <property type="match status" value="1"/>
</dbReference>
<dbReference type="InterPro" id="IPR001451">
    <property type="entry name" value="Hexapep"/>
</dbReference>
<dbReference type="InterPro" id="IPR007691">
    <property type="entry name" value="LpxD"/>
</dbReference>
<dbReference type="InterPro" id="IPR011004">
    <property type="entry name" value="Trimer_LpxA-like_sf"/>
</dbReference>
<dbReference type="InterPro" id="IPR020573">
    <property type="entry name" value="UDP_GlcNAc_AcTrfase_non-rep"/>
</dbReference>
<dbReference type="NCBIfam" id="TIGR01853">
    <property type="entry name" value="lipid_A_lpxD"/>
    <property type="match status" value="1"/>
</dbReference>
<dbReference type="NCBIfam" id="NF002060">
    <property type="entry name" value="PRK00892.1"/>
    <property type="match status" value="1"/>
</dbReference>
<dbReference type="PANTHER" id="PTHR43378">
    <property type="entry name" value="UDP-3-O-ACYLGLUCOSAMINE N-ACYLTRANSFERASE"/>
    <property type="match status" value="1"/>
</dbReference>
<dbReference type="PANTHER" id="PTHR43378:SF2">
    <property type="entry name" value="UDP-3-O-ACYLGLUCOSAMINE N-ACYLTRANSFERASE 1, MITOCHONDRIAL-RELATED"/>
    <property type="match status" value="1"/>
</dbReference>
<dbReference type="Pfam" id="PF00132">
    <property type="entry name" value="Hexapep"/>
    <property type="match status" value="1"/>
</dbReference>
<dbReference type="Pfam" id="PF04613">
    <property type="entry name" value="LpxD"/>
    <property type="match status" value="1"/>
</dbReference>
<dbReference type="SUPFAM" id="SSF51161">
    <property type="entry name" value="Trimeric LpxA-like enzymes"/>
    <property type="match status" value="1"/>
</dbReference>
<sequence length="337" mass="34805">MRLTASEIAAQFGLTVVGDGATEVSGVATLAHAGTGQLSFLANPRYRPQLAETQASVVILRADDAESAQGTALVAKDPYTAFAKIAALFDVAPVRAPGIHASAVIDPTATVSPTAHVGPFVSIGAGSRVGDGCVIGAGSIIGEDCVVDDGCELIARVTLVTRVRLGKRVRVHPGAVLGADGFGLAMDAGHWIKVPQLGGVVIGDDCEIGANTCIDRGALEDTVLEEDVRVDNLVQIAHNCRIGAHSAIAGCTGIAGSAKIGRYCLLGGHVGVVGHLEICDKVVITGKSVVRNSIHEPGEYSSGTPLTDNRTWRKNAARFKQLDALARRILAVGKENQ</sequence>
<reference key="1">
    <citation type="journal article" date="2005" name="Genome Res.">
        <title>Comparative and functional genomic analyses of the pathogenicity of phytopathogen Xanthomonas campestris pv. campestris.</title>
        <authorList>
            <person name="Qian W."/>
            <person name="Jia Y."/>
            <person name="Ren S.-X."/>
            <person name="He Y.-Q."/>
            <person name="Feng J.-X."/>
            <person name="Lu L.-F."/>
            <person name="Sun Q."/>
            <person name="Ying G."/>
            <person name="Tang D.-J."/>
            <person name="Tang H."/>
            <person name="Wu W."/>
            <person name="Hao P."/>
            <person name="Wang L."/>
            <person name="Jiang B.-L."/>
            <person name="Zeng S."/>
            <person name="Gu W.-Y."/>
            <person name="Lu G."/>
            <person name="Rong L."/>
            <person name="Tian Y."/>
            <person name="Yao Z."/>
            <person name="Fu G."/>
            <person name="Chen B."/>
            <person name="Fang R."/>
            <person name="Qiang B."/>
            <person name="Chen Z."/>
            <person name="Zhao G.-P."/>
            <person name="Tang J.-L."/>
            <person name="He C."/>
        </authorList>
    </citation>
    <scope>NUCLEOTIDE SEQUENCE [LARGE SCALE GENOMIC DNA]</scope>
    <source>
        <strain>8004</strain>
    </source>
</reference>
<protein>
    <recommendedName>
        <fullName evidence="1">UDP-3-O-acylglucosamine N-acyltransferase</fullName>
        <ecNumber evidence="1">2.3.1.191</ecNumber>
    </recommendedName>
</protein>
<gene>
    <name evidence="1" type="primary">lpxD</name>
    <name type="ordered locus">XC_2875</name>
</gene>
<keyword id="KW-0012">Acyltransferase</keyword>
<keyword id="KW-0441">Lipid A biosynthesis</keyword>
<keyword id="KW-0444">Lipid biosynthesis</keyword>
<keyword id="KW-0443">Lipid metabolism</keyword>
<keyword id="KW-0677">Repeat</keyword>
<keyword id="KW-0808">Transferase</keyword>
<comment type="function">
    <text evidence="1">Catalyzes the N-acylation of UDP-3-O-acylglucosamine using 3-hydroxyacyl-ACP as the acyl donor. Is involved in the biosynthesis of lipid A, a phosphorylated glycolipid that anchors the lipopolysaccharide to the outer membrane of the cell.</text>
</comment>
<comment type="catalytic activity">
    <reaction evidence="1">
        <text>a UDP-3-O-[(3R)-3-hydroxyacyl]-alpha-D-glucosamine + a (3R)-hydroxyacyl-[ACP] = a UDP-2-N,3-O-bis[(3R)-3-hydroxyacyl]-alpha-D-glucosamine + holo-[ACP] + H(+)</text>
        <dbReference type="Rhea" id="RHEA:53836"/>
        <dbReference type="Rhea" id="RHEA-COMP:9685"/>
        <dbReference type="Rhea" id="RHEA-COMP:9945"/>
        <dbReference type="ChEBI" id="CHEBI:15378"/>
        <dbReference type="ChEBI" id="CHEBI:64479"/>
        <dbReference type="ChEBI" id="CHEBI:78827"/>
        <dbReference type="ChEBI" id="CHEBI:137740"/>
        <dbReference type="ChEBI" id="CHEBI:137748"/>
        <dbReference type="EC" id="2.3.1.191"/>
    </reaction>
</comment>
<comment type="pathway">
    <text evidence="1">Bacterial outer membrane biogenesis; LPS lipid A biosynthesis.</text>
</comment>
<comment type="subunit">
    <text evidence="1">Homotrimer.</text>
</comment>
<comment type="similarity">
    <text evidence="1">Belongs to the transferase hexapeptide repeat family. LpxD subfamily.</text>
</comment>